<protein>
    <recommendedName>
        <fullName>J domain-containing protein CG6693</fullName>
    </recommendedName>
</protein>
<name>Y6693_DROME</name>
<reference key="1">
    <citation type="journal article" date="2000" name="Science">
        <title>The genome sequence of Drosophila melanogaster.</title>
        <authorList>
            <person name="Adams M.D."/>
            <person name="Celniker S.E."/>
            <person name="Holt R.A."/>
            <person name="Evans C.A."/>
            <person name="Gocayne J.D."/>
            <person name="Amanatides P.G."/>
            <person name="Scherer S.E."/>
            <person name="Li P.W."/>
            <person name="Hoskins R.A."/>
            <person name="Galle R.F."/>
            <person name="George R.A."/>
            <person name="Lewis S.E."/>
            <person name="Richards S."/>
            <person name="Ashburner M."/>
            <person name="Henderson S.N."/>
            <person name="Sutton G.G."/>
            <person name="Wortman J.R."/>
            <person name="Yandell M.D."/>
            <person name="Zhang Q."/>
            <person name="Chen L.X."/>
            <person name="Brandon R.C."/>
            <person name="Rogers Y.-H.C."/>
            <person name="Blazej R.G."/>
            <person name="Champe M."/>
            <person name="Pfeiffer B.D."/>
            <person name="Wan K.H."/>
            <person name="Doyle C."/>
            <person name="Baxter E.G."/>
            <person name="Helt G."/>
            <person name="Nelson C.R."/>
            <person name="Miklos G.L.G."/>
            <person name="Abril J.F."/>
            <person name="Agbayani A."/>
            <person name="An H.-J."/>
            <person name="Andrews-Pfannkoch C."/>
            <person name="Baldwin D."/>
            <person name="Ballew R.M."/>
            <person name="Basu A."/>
            <person name="Baxendale J."/>
            <person name="Bayraktaroglu L."/>
            <person name="Beasley E.M."/>
            <person name="Beeson K.Y."/>
            <person name="Benos P.V."/>
            <person name="Berman B.P."/>
            <person name="Bhandari D."/>
            <person name="Bolshakov S."/>
            <person name="Borkova D."/>
            <person name="Botchan M.R."/>
            <person name="Bouck J."/>
            <person name="Brokstein P."/>
            <person name="Brottier P."/>
            <person name="Burtis K.C."/>
            <person name="Busam D.A."/>
            <person name="Butler H."/>
            <person name="Cadieu E."/>
            <person name="Center A."/>
            <person name="Chandra I."/>
            <person name="Cherry J.M."/>
            <person name="Cawley S."/>
            <person name="Dahlke C."/>
            <person name="Davenport L.B."/>
            <person name="Davies P."/>
            <person name="de Pablos B."/>
            <person name="Delcher A."/>
            <person name="Deng Z."/>
            <person name="Mays A.D."/>
            <person name="Dew I."/>
            <person name="Dietz S.M."/>
            <person name="Dodson K."/>
            <person name="Doup L.E."/>
            <person name="Downes M."/>
            <person name="Dugan-Rocha S."/>
            <person name="Dunkov B.C."/>
            <person name="Dunn P."/>
            <person name="Durbin K.J."/>
            <person name="Evangelista C.C."/>
            <person name="Ferraz C."/>
            <person name="Ferriera S."/>
            <person name="Fleischmann W."/>
            <person name="Fosler C."/>
            <person name="Gabrielian A.E."/>
            <person name="Garg N.S."/>
            <person name="Gelbart W.M."/>
            <person name="Glasser K."/>
            <person name="Glodek A."/>
            <person name="Gong F."/>
            <person name="Gorrell J.H."/>
            <person name="Gu Z."/>
            <person name="Guan P."/>
            <person name="Harris M."/>
            <person name="Harris N.L."/>
            <person name="Harvey D.A."/>
            <person name="Heiman T.J."/>
            <person name="Hernandez J.R."/>
            <person name="Houck J."/>
            <person name="Hostin D."/>
            <person name="Houston K.A."/>
            <person name="Howland T.J."/>
            <person name="Wei M.-H."/>
            <person name="Ibegwam C."/>
            <person name="Jalali M."/>
            <person name="Kalush F."/>
            <person name="Karpen G.H."/>
            <person name="Ke Z."/>
            <person name="Kennison J.A."/>
            <person name="Ketchum K.A."/>
            <person name="Kimmel B.E."/>
            <person name="Kodira C.D."/>
            <person name="Kraft C.L."/>
            <person name="Kravitz S."/>
            <person name="Kulp D."/>
            <person name="Lai Z."/>
            <person name="Lasko P."/>
            <person name="Lei Y."/>
            <person name="Levitsky A.A."/>
            <person name="Li J.H."/>
            <person name="Li Z."/>
            <person name="Liang Y."/>
            <person name="Lin X."/>
            <person name="Liu X."/>
            <person name="Mattei B."/>
            <person name="McIntosh T.C."/>
            <person name="McLeod M.P."/>
            <person name="McPherson D."/>
            <person name="Merkulov G."/>
            <person name="Milshina N.V."/>
            <person name="Mobarry C."/>
            <person name="Morris J."/>
            <person name="Moshrefi A."/>
            <person name="Mount S.M."/>
            <person name="Moy M."/>
            <person name="Murphy B."/>
            <person name="Murphy L."/>
            <person name="Muzny D.M."/>
            <person name="Nelson D.L."/>
            <person name="Nelson D.R."/>
            <person name="Nelson K.A."/>
            <person name="Nixon K."/>
            <person name="Nusskern D.R."/>
            <person name="Pacleb J.M."/>
            <person name="Palazzolo M."/>
            <person name="Pittman G.S."/>
            <person name="Pan S."/>
            <person name="Pollard J."/>
            <person name="Puri V."/>
            <person name="Reese M.G."/>
            <person name="Reinert K."/>
            <person name="Remington K."/>
            <person name="Saunders R.D.C."/>
            <person name="Scheeler F."/>
            <person name="Shen H."/>
            <person name="Shue B.C."/>
            <person name="Siden-Kiamos I."/>
            <person name="Simpson M."/>
            <person name="Skupski M.P."/>
            <person name="Smith T.J."/>
            <person name="Spier E."/>
            <person name="Spradling A.C."/>
            <person name="Stapleton M."/>
            <person name="Strong R."/>
            <person name="Sun E."/>
            <person name="Svirskas R."/>
            <person name="Tector C."/>
            <person name="Turner R."/>
            <person name="Venter E."/>
            <person name="Wang A.H."/>
            <person name="Wang X."/>
            <person name="Wang Z.-Y."/>
            <person name="Wassarman D.A."/>
            <person name="Weinstock G.M."/>
            <person name="Weissenbach J."/>
            <person name="Williams S.M."/>
            <person name="Woodage T."/>
            <person name="Worley K.C."/>
            <person name="Wu D."/>
            <person name="Yang S."/>
            <person name="Yao Q.A."/>
            <person name="Ye J."/>
            <person name="Yeh R.-F."/>
            <person name="Zaveri J.S."/>
            <person name="Zhan M."/>
            <person name="Zhang G."/>
            <person name="Zhao Q."/>
            <person name="Zheng L."/>
            <person name="Zheng X.H."/>
            <person name="Zhong F.N."/>
            <person name="Zhong W."/>
            <person name="Zhou X."/>
            <person name="Zhu S.C."/>
            <person name="Zhu X."/>
            <person name="Smith H.O."/>
            <person name="Gibbs R.A."/>
            <person name="Myers E.W."/>
            <person name="Rubin G.M."/>
            <person name="Venter J.C."/>
        </authorList>
    </citation>
    <scope>NUCLEOTIDE SEQUENCE [LARGE SCALE GENOMIC DNA]</scope>
    <source>
        <strain>Berkeley</strain>
    </source>
</reference>
<reference key="2">
    <citation type="journal article" date="2002" name="Genome Biol.">
        <title>Annotation of the Drosophila melanogaster euchromatic genome: a systematic review.</title>
        <authorList>
            <person name="Misra S."/>
            <person name="Crosby M.A."/>
            <person name="Mungall C.J."/>
            <person name="Matthews B.B."/>
            <person name="Campbell K.S."/>
            <person name="Hradecky P."/>
            <person name="Huang Y."/>
            <person name="Kaminker J.S."/>
            <person name="Millburn G.H."/>
            <person name="Prochnik S.E."/>
            <person name="Smith C.D."/>
            <person name="Tupy J.L."/>
            <person name="Whitfield E.J."/>
            <person name="Bayraktaroglu L."/>
            <person name="Berman B.P."/>
            <person name="Bettencourt B.R."/>
            <person name="Celniker S.E."/>
            <person name="de Grey A.D.N.J."/>
            <person name="Drysdale R.A."/>
            <person name="Harris N.L."/>
            <person name="Richter J."/>
            <person name="Russo S."/>
            <person name="Schroeder A.J."/>
            <person name="Shu S.Q."/>
            <person name="Stapleton M."/>
            <person name="Yamada C."/>
            <person name="Ashburner M."/>
            <person name="Gelbart W.M."/>
            <person name="Rubin G.M."/>
            <person name="Lewis S.E."/>
        </authorList>
    </citation>
    <scope>GENOME REANNOTATION</scope>
    <source>
        <strain>Berkeley</strain>
    </source>
</reference>
<reference key="3">
    <citation type="journal article" date="2002" name="Genome Biol.">
        <title>A Drosophila full-length cDNA resource.</title>
        <authorList>
            <person name="Stapleton M."/>
            <person name="Carlson J.W."/>
            <person name="Brokstein P."/>
            <person name="Yu C."/>
            <person name="Champe M."/>
            <person name="George R.A."/>
            <person name="Guarin H."/>
            <person name="Kronmiller B."/>
            <person name="Pacleb J.M."/>
            <person name="Park S."/>
            <person name="Wan K.H."/>
            <person name="Rubin G.M."/>
            <person name="Celniker S.E."/>
        </authorList>
    </citation>
    <scope>NUCLEOTIDE SEQUENCE [LARGE SCALE MRNA]</scope>
    <source>
        <strain>Berkeley</strain>
        <tissue>Embryo</tissue>
    </source>
</reference>
<reference key="4">
    <citation type="journal article" date="2007" name="Mol. Biosyst.">
        <title>An integrated chemical, mass spectrometric and computational strategy for (quantitative) phosphoproteomics: application to Drosophila melanogaster Kc167 cells.</title>
        <authorList>
            <person name="Bodenmiller B."/>
            <person name="Mueller L.N."/>
            <person name="Pedrioli P.G.A."/>
            <person name="Pflieger D."/>
            <person name="Juenger M.A."/>
            <person name="Eng J.K."/>
            <person name="Aebersold R."/>
            <person name="Tao W.A."/>
        </authorList>
    </citation>
    <scope>PHOSPHORYLATION [LARGE SCALE ANALYSIS] AT SER-239</scope>
    <scope>IDENTIFICATION BY MASS SPECTROMETRY</scope>
</reference>
<keyword id="KW-0597">Phosphoprotein</keyword>
<keyword id="KW-1185">Reference proteome</keyword>
<organism>
    <name type="scientific">Drosophila melanogaster</name>
    <name type="common">Fruit fly</name>
    <dbReference type="NCBI Taxonomy" id="7227"/>
    <lineage>
        <taxon>Eukaryota</taxon>
        <taxon>Metazoa</taxon>
        <taxon>Ecdysozoa</taxon>
        <taxon>Arthropoda</taxon>
        <taxon>Hexapoda</taxon>
        <taxon>Insecta</taxon>
        <taxon>Pterygota</taxon>
        <taxon>Neoptera</taxon>
        <taxon>Endopterygota</taxon>
        <taxon>Diptera</taxon>
        <taxon>Brachycera</taxon>
        <taxon>Muscomorpha</taxon>
        <taxon>Ephydroidea</taxon>
        <taxon>Drosophilidae</taxon>
        <taxon>Drosophila</taxon>
        <taxon>Sophophora</taxon>
    </lineage>
</organism>
<feature type="chain" id="PRO_0000348223" description="J domain-containing protein CG6693">
    <location>
        <begin position="1"/>
        <end position="299"/>
    </location>
</feature>
<feature type="domain" description="J" evidence="1">
    <location>
        <begin position="15"/>
        <end position="82"/>
    </location>
</feature>
<feature type="region of interest" description="Disordered" evidence="2">
    <location>
        <begin position="266"/>
        <end position="299"/>
    </location>
</feature>
<feature type="compositionally biased region" description="Basic residues" evidence="2">
    <location>
        <begin position="268"/>
        <end position="277"/>
    </location>
</feature>
<feature type="modified residue" description="Phosphoserine" evidence="3">
    <location>
        <position position="239"/>
    </location>
</feature>
<dbReference type="EMBL" id="AE014297">
    <property type="protein sequence ID" value="AAF54608.1"/>
    <property type="molecule type" value="Genomic_DNA"/>
</dbReference>
<dbReference type="EMBL" id="AY069345">
    <property type="protein sequence ID" value="AAL39490.1"/>
    <property type="molecule type" value="mRNA"/>
</dbReference>
<dbReference type="RefSeq" id="NP_001262473.1">
    <property type="nucleotide sequence ID" value="NM_001275544.1"/>
</dbReference>
<dbReference type="RefSeq" id="NP_650052.1">
    <property type="nucleotide sequence ID" value="NM_141795.3"/>
</dbReference>
<dbReference type="SMR" id="Q9VGR7"/>
<dbReference type="BioGRID" id="66480">
    <property type="interactions" value="7"/>
</dbReference>
<dbReference type="FunCoup" id="Q9VGR7">
    <property type="interactions" value="2615"/>
</dbReference>
<dbReference type="IntAct" id="Q9VGR7">
    <property type="interactions" value="35"/>
</dbReference>
<dbReference type="STRING" id="7227.FBpp0081843"/>
<dbReference type="iPTMnet" id="Q9VGR7"/>
<dbReference type="PaxDb" id="7227-FBpp0081843"/>
<dbReference type="DNASU" id="41346"/>
<dbReference type="EnsemblMetazoa" id="FBtr0082367">
    <property type="protein sequence ID" value="FBpp0081843"/>
    <property type="gene ID" value="FBgn0037878"/>
</dbReference>
<dbReference type="EnsemblMetazoa" id="FBtr0336784">
    <property type="protein sequence ID" value="FBpp0307760"/>
    <property type="gene ID" value="FBgn0037878"/>
</dbReference>
<dbReference type="GeneID" id="41346"/>
<dbReference type="KEGG" id="dme:Dmel_CG6693"/>
<dbReference type="UCSC" id="CG6693-RA">
    <property type="organism name" value="d. melanogaster"/>
</dbReference>
<dbReference type="AGR" id="FB:FBgn0037878"/>
<dbReference type="FlyBase" id="FBgn0037878">
    <property type="gene designation" value="CG6693"/>
</dbReference>
<dbReference type="VEuPathDB" id="VectorBase:FBgn0037878"/>
<dbReference type="eggNOG" id="KOG0719">
    <property type="taxonomic scope" value="Eukaryota"/>
</dbReference>
<dbReference type="GeneTree" id="ENSGT00390000014549"/>
<dbReference type="HOGENOM" id="CLU_055868_1_0_1"/>
<dbReference type="InParanoid" id="Q9VGR7"/>
<dbReference type="OMA" id="WLDLWSK"/>
<dbReference type="OrthoDB" id="110024at2759"/>
<dbReference type="PhylomeDB" id="Q9VGR7"/>
<dbReference type="BioGRID-ORCS" id="41346">
    <property type="hits" value="0 hits in 1 CRISPR screen"/>
</dbReference>
<dbReference type="GenomeRNAi" id="41346"/>
<dbReference type="PRO" id="PR:Q9VGR7"/>
<dbReference type="Proteomes" id="UP000000803">
    <property type="component" value="Chromosome 3R"/>
</dbReference>
<dbReference type="Bgee" id="FBgn0037878">
    <property type="expression patterns" value="Expressed in secondary oocyte and 119 other cell types or tissues"/>
</dbReference>
<dbReference type="ExpressionAtlas" id="Q9VGR7">
    <property type="expression patterns" value="baseline and differential"/>
</dbReference>
<dbReference type="GO" id="GO:0005737">
    <property type="term" value="C:cytoplasm"/>
    <property type="evidence" value="ECO:0000318"/>
    <property type="project" value="GO_Central"/>
</dbReference>
<dbReference type="GO" id="GO:0005634">
    <property type="term" value="C:nucleus"/>
    <property type="evidence" value="ECO:0000318"/>
    <property type="project" value="GO_Central"/>
</dbReference>
<dbReference type="GO" id="GO:0031072">
    <property type="term" value="F:heat shock protein binding"/>
    <property type="evidence" value="ECO:0000318"/>
    <property type="project" value="GO_Central"/>
</dbReference>
<dbReference type="CDD" id="cd06257">
    <property type="entry name" value="DnaJ"/>
    <property type="match status" value="1"/>
</dbReference>
<dbReference type="FunFam" id="1.10.287.110:FF:000035">
    <property type="entry name" value="DnaJ homolog subfamily C member 9"/>
    <property type="match status" value="1"/>
</dbReference>
<dbReference type="Gene3D" id="1.10.287.110">
    <property type="entry name" value="DnaJ domain"/>
    <property type="match status" value="1"/>
</dbReference>
<dbReference type="InterPro" id="IPR001623">
    <property type="entry name" value="DnaJ_domain"/>
</dbReference>
<dbReference type="InterPro" id="IPR018253">
    <property type="entry name" value="DnaJ_domain_CS"/>
</dbReference>
<dbReference type="InterPro" id="IPR056453">
    <property type="entry name" value="HTH_DNAJC9"/>
</dbReference>
<dbReference type="InterPro" id="IPR036869">
    <property type="entry name" value="J_dom_sf"/>
</dbReference>
<dbReference type="InterPro" id="IPR052594">
    <property type="entry name" value="J_domain-containing_protein"/>
</dbReference>
<dbReference type="PANTHER" id="PTHR44144">
    <property type="entry name" value="DNAJ HOMOLOG SUBFAMILY C MEMBER 9"/>
    <property type="match status" value="1"/>
</dbReference>
<dbReference type="PANTHER" id="PTHR44144:SF1">
    <property type="entry name" value="DNAJ HOMOLOG SUBFAMILY C MEMBER 9"/>
    <property type="match status" value="1"/>
</dbReference>
<dbReference type="Pfam" id="PF00226">
    <property type="entry name" value="DnaJ"/>
    <property type="match status" value="1"/>
</dbReference>
<dbReference type="Pfam" id="PF23302">
    <property type="entry name" value="HTH_DNAJC9"/>
    <property type="match status" value="1"/>
</dbReference>
<dbReference type="PRINTS" id="PR00625">
    <property type="entry name" value="JDOMAIN"/>
</dbReference>
<dbReference type="SMART" id="SM00271">
    <property type="entry name" value="DnaJ"/>
    <property type="match status" value="1"/>
</dbReference>
<dbReference type="SUPFAM" id="SSF46565">
    <property type="entry name" value="Chaperone J-domain"/>
    <property type="match status" value="1"/>
</dbReference>
<dbReference type="PROSITE" id="PS00636">
    <property type="entry name" value="DNAJ_1"/>
    <property type="match status" value="1"/>
</dbReference>
<dbReference type="PROSITE" id="PS50076">
    <property type="entry name" value="DNAJ_2"/>
    <property type="match status" value="1"/>
</dbReference>
<gene>
    <name type="ORF">CG6693</name>
</gene>
<sequence>MSTLELCEKYFGTRDVYKLMELARGAGEKEVKKAYHKLSLLVHPDRVPEEQKAESTEKFKVLSKLYQVLTDTQKRALYDEQGVIDDDDESESKLSSWLELWSKIFKPITEEDINNYEKEYVESELERTDLKKAYLGGKGCINYLMNHVPFMKVEDEPRIQKIVQDMIASGEVPEYKIFTEEPAAKRKKRHQKYAREFKEAKVIKERLKRRQKEKDDQDLADNGGDLQQMILARRNQRESNFGSLMDRLMEKYGNEDDSDTVDFSAFEKKKKKSKKPAAKQETKPKLNGVKAGRVEKGKN</sequence>
<proteinExistence type="evidence at protein level"/>
<evidence type="ECO:0000255" key="1">
    <source>
        <dbReference type="PROSITE-ProRule" id="PRU00286"/>
    </source>
</evidence>
<evidence type="ECO:0000256" key="2">
    <source>
        <dbReference type="SAM" id="MobiDB-lite"/>
    </source>
</evidence>
<evidence type="ECO:0000269" key="3">
    <source>
    </source>
</evidence>
<accession>Q9VGR7</accession>